<proteinExistence type="inferred from homology"/>
<keyword id="KW-0963">Cytoplasm</keyword>
<keyword id="KW-0378">Hydrolase</keyword>
<keyword id="KW-0540">Nuclease</keyword>
<keyword id="KW-1185">Reference proteome</keyword>
<keyword id="KW-0690">Ribosome biogenesis</keyword>
<protein>
    <recommendedName>
        <fullName evidence="1">Putative pre-16S rRNA nuclease</fullName>
        <ecNumber evidence="1">3.1.-.-</ecNumber>
    </recommendedName>
</protein>
<comment type="function">
    <text evidence="1">Could be a nuclease involved in processing of the 5'-end of pre-16S rRNA.</text>
</comment>
<comment type="subcellular location">
    <subcellularLocation>
        <location evidence="1">Cytoplasm</location>
    </subcellularLocation>
</comment>
<comment type="similarity">
    <text evidence="1">Belongs to the YqgF nuclease family.</text>
</comment>
<name>YQGF_LEUCK</name>
<feature type="chain" id="PRO_1000131046" description="Putative pre-16S rRNA nuclease">
    <location>
        <begin position="1"/>
        <end position="143"/>
    </location>
</feature>
<dbReference type="EC" id="3.1.-.-" evidence="1"/>
<dbReference type="EMBL" id="DQ489736">
    <property type="protein sequence ID" value="ACA82302.1"/>
    <property type="molecule type" value="Genomic_DNA"/>
</dbReference>
<dbReference type="SMR" id="B1MXQ0"/>
<dbReference type="STRING" id="349519.LCK_00469"/>
<dbReference type="KEGG" id="lci:LCK_00469"/>
<dbReference type="eggNOG" id="COG0816">
    <property type="taxonomic scope" value="Bacteria"/>
</dbReference>
<dbReference type="HOGENOM" id="CLU_098240_2_0_9"/>
<dbReference type="OrthoDB" id="9796140at2"/>
<dbReference type="Proteomes" id="UP000002166">
    <property type="component" value="Chromosome"/>
</dbReference>
<dbReference type="GO" id="GO:0005829">
    <property type="term" value="C:cytosol"/>
    <property type="evidence" value="ECO:0007669"/>
    <property type="project" value="TreeGrafter"/>
</dbReference>
<dbReference type="GO" id="GO:0004518">
    <property type="term" value="F:nuclease activity"/>
    <property type="evidence" value="ECO:0007669"/>
    <property type="project" value="UniProtKB-KW"/>
</dbReference>
<dbReference type="GO" id="GO:0000967">
    <property type="term" value="P:rRNA 5'-end processing"/>
    <property type="evidence" value="ECO:0007669"/>
    <property type="project" value="UniProtKB-UniRule"/>
</dbReference>
<dbReference type="CDD" id="cd16964">
    <property type="entry name" value="YqgF"/>
    <property type="match status" value="1"/>
</dbReference>
<dbReference type="Gene3D" id="3.30.420.140">
    <property type="entry name" value="YqgF/RNase H-like domain"/>
    <property type="match status" value="1"/>
</dbReference>
<dbReference type="HAMAP" id="MF_00651">
    <property type="entry name" value="Nuclease_YqgF"/>
    <property type="match status" value="1"/>
</dbReference>
<dbReference type="InterPro" id="IPR012337">
    <property type="entry name" value="RNaseH-like_sf"/>
</dbReference>
<dbReference type="InterPro" id="IPR005227">
    <property type="entry name" value="YqgF"/>
</dbReference>
<dbReference type="InterPro" id="IPR006641">
    <property type="entry name" value="YqgF/RNaseH-like_dom"/>
</dbReference>
<dbReference type="InterPro" id="IPR037027">
    <property type="entry name" value="YqgF/RNaseH-like_dom_sf"/>
</dbReference>
<dbReference type="NCBIfam" id="TIGR00250">
    <property type="entry name" value="RNAse_H_YqgF"/>
    <property type="match status" value="1"/>
</dbReference>
<dbReference type="PANTHER" id="PTHR33317">
    <property type="entry name" value="POLYNUCLEOTIDYL TRANSFERASE, RIBONUCLEASE H-LIKE SUPERFAMILY PROTEIN"/>
    <property type="match status" value="1"/>
</dbReference>
<dbReference type="PANTHER" id="PTHR33317:SF4">
    <property type="entry name" value="POLYNUCLEOTIDYL TRANSFERASE, RIBONUCLEASE H-LIKE SUPERFAMILY PROTEIN"/>
    <property type="match status" value="1"/>
</dbReference>
<dbReference type="Pfam" id="PF03652">
    <property type="entry name" value="RuvX"/>
    <property type="match status" value="1"/>
</dbReference>
<dbReference type="SMART" id="SM00732">
    <property type="entry name" value="YqgFc"/>
    <property type="match status" value="1"/>
</dbReference>
<dbReference type="SUPFAM" id="SSF53098">
    <property type="entry name" value="Ribonuclease H-like"/>
    <property type="match status" value="1"/>
</dbReference>
<gene>
    <name type="ordered locus">LCK_00469</name>
</gene>
<evidence type="ECO:0000255" key="1">
    <source>
        <dbReference type="HAMAP-Rule" id="MF_00651"/>
    </source>
</evidence>
<sequence>MRLLGLDVGSRTVGVAVSDPMGWTAQGVEIIRINEDEKEFGLARLGEIIKEKQAKGVVVGLPKNMNNSEGPRAEAARQYAQMVEDQFNLPTDFQDERLTTVQAERMLVEEADVSRKKRKQVIDKIAAEFILQNYLDANGPLTK</sequence>
<accession>B1MXQ0</accession>
<reference key="1">
    <citation type="journal article" date="2008" name="J. Bacteriol.">
        <title>Complete genome sequence of Leuconostoc citreum KM20.</title>
        <authorList>
            <person name="Kim J.F."/>
            <person name="Jeong H."/>
            <person name="Lee J.-S."/>
            <person name="Choi S.-H."/>
            <person name="Ha M."/>
            <person name="Hur C.-G."/>
            <person name="Kim J.-S."/>
            <person name="Lee S."/>
            <person name="Park H.-S."/>
            <person name="Park Y.-H."/>
            <person name="Oh T.K."/>
        </authorList>
    </citation>
    <scope>NUCLEOTIDE SEQUENCE [LARGE SCALE GENOMIC DNA]</scope>
    <source>
        <strain>KM20</strain>
    </source>
</reference>
<organism>
    <name type="scientific">Leuconostoc citreum (strain KM20)</name>
    <dbReference type="NCBI Taxonomy" id="349519"/>
    <lineage>
        <taxon>Bacteria</taxon>
        <taxon>Bacillati</taxon>
        <taxon>Bacillota</taxon>
        <taxon>Bacilli</taxon>
        <taxon>Lactobacillales</taxon>
        <taxon>Lactobacillaceae</taxon>
        <taxon>Leuconostoc</taxon>
    </lineage>
</organism>